<dbReference type="CCDS" id="CCDS14982.2">
    <molecule id="A0A5F8MPU3-2"/>
</dbReference>
<dbReference type="CCDS" id="CCDS87833.1">
    <molecule id="A0A5F8MPU3-1"/>
</dbReference>
<dbReference type="RefSeq" id="NP_080876.1">
    <molecule id="A0A5F8MPU3-1"/>
    <property type="nucleotide sequence ID" value="NM_026600.1"/>
</dbReference>
<dbReference type="RefSeq" id="NP_780409.2">
    <molecule id="A0A5F8MPU3-2"/>
    <property type="nucleotide sequence ID" value="NM_175200.4"/>
</dbReference>
<dbReference type="FunCoup" id="A0A5F8MPU3">
    <property type="interactions" value="4"/>
</dbReference>
<dbReference type="STRING" id="10090.ENSMUSP00000094845"/>
<dbReference type="GlyGen" id="A0A5F8MPU3">
    <property type="glycosylation" value="1 site"/>
</dbReference>
<dbReference type="iPTMnet" id="A0A5F8MPU3"/>
<dbReference type="PhosphoSitePlus" id="A0A5F8MPU3"/>
<dbReference type="PaxDb" id="10090-ENSMUSP00000094845"/>
<dbReference type="ProteomicsDB" id="363953"/>
<dbReference type="Antibodypedia" id="35141">
    <property type="antibodies" value="155 antibodies from 22 providers"/>
</dbReference>
<dbReference type="Ensembl" id="ENSMUST00000097080.4">
    <molecule id="A0A5F8MPU3-2"/>
    <property type="protein sequence ID" value="ENSMUSP00000094845.4"/>
    <property type="gene ID" value="ENSMUSG00000072295.8"/>
</dbReference>
<dbReference type="Ensembl" id="ENSMUST00000238949.2">
    <molecule id="A0A5F8MPU3-1"/>
    <property type="protein sequence ID" value="ENSMUSP00000159118.2"/>
    <property type="gene ID" value="ENSMUSG00000072295.8"/>
</dbReference>
<dbReference type="GeneID" id="73463"/>
<dbReference type="AGR" id="MGI:1920713"/>
<dbReference type="MGI" id="MGI:1920713">
    <property type="gene designation" value="C2cd6"/>
</dbReference>
<dbReference type="VEuPathDB" id="HostDB:ENSMUSG00000072295"/>
<dbReference type="eggNOG" id="ENOG502S23V">
    <property type="taxonomic scope" value="Eukaryota"/>
</dbReference>
<dbReference type="GeneTree" id="ENSGT00390000018209"/>
<dbReference type="HOGENOM" id="CLU_030502_1_0_1"/>
<dbReference type="InParanoid" id="A0A5F8MPU3"/>
<dbReference type="OMA" id="DIYKRRN"/>
<dbReference type="OrthoDB" id="2144823at2759"/>
<dbReference type="TreeFam" id="TF328407"/>
<dbReference type="BioGRID-ORCS" id="73463">
    <property type="hits" value="1 hit in 77 CRISPR screens"/>
</dbReference>
<dbReference type="ChiTaRS" id="C2cd6">
    <property type="organism name" value="mouse"/>
</dbReference>
<dbReference type="PRO" id="PR:A0A5F8MPU3"/>
<dbReference type="Proteomes" id="UP000000589">
    <property type="component" value="Chromosome 1"/>
</dbReference>
<dbReference type="Bgee" id="ENSMUSG00000072295">
    <property type="expression patterns" value="Expressed in spermatid and 14 other cell types or tissues"/>
</dbReference>
<dbReference type="ExpressionAtlas" id="A0A5F8MPU3">
    <property type="expression patterns" value="baseline and differential"/>
</dbReference>
<dbReference type="GO" id="GO:0036128">
    <property type="term" value="C:CatSper complex"/>
    <property type="evidence" value="ECO:0000314"/>
    <property type="project" value="UniProtKB"/>
</dbReference>
<dbReference type="GO" id="GO:0036126">
    <property type="term" value="C:sperm flagellum"/>
    <property type="evidence" value="ECO:0000314"/>
    <property type="project" value="MGI"/>
</dbReference>
<dbReference type="GO" id="GO:0097228">
    <property type="term" value="C:sperm principal piece"/>
    <property type="evidence" value="ECO:0000314"/>
    <property type="project" value="UniProtKB"/>
</dbReference>
<dbReference type="GO" id="GO:0070588">
    <property type="term" value="P:calcium ion transmembrane transport"/>
    <property type="evidence" value="ECO:0000315"/>
    <property type="project" value="MGI"/>
</dbReference>
<dbReference type="GO" id="GO:0030317">
    <property type="term" value="P:flagellated sperm motility"/>
    <property type="evidence" value="ECO:0000315"/>
    <property type="project" value="UniProtKB"/>
</dbReference>
<dbReference type="GO" id="GO:0065003">
    <property type="term" value="P:protein-containing complex assembly"/>
    <property type="evidence" value="ECO:0000315"/>
    <property type="project" value="MGI"/>
</dbReference>
<dbReference type="GO" id="GO:0007338">
    <property type="term" value="P:single fertilization"/>
    <property type="evidence" value="ECO:0000315"/>
    <property type="project" value="MGI"/>
</dbReference>
<dbReference type="GO" id="GO:0048240">
    <property type="term" value="P:sperm capacitation"/>
    <property type="evidence" value="ECO:0000315"/>
    <property type="project" value="UniProtKB"/>
</dbReference>
<dbReference type="GO" id="GO:0007283">
    <property type="term" value="P:spermatogenesis"/>
    <property type="evidence" value="ECO:0000315"/>
    <property type="project" value="UniProtKB"/>
</dbReference>
<dbReference type="GO" id="GO:0098876">
    <property type="term" value="P:vesicle-mediated transport to the plasma membrane"/>
    <property type="evidence" value="ECO:0000314"/>
    <property type="project" value="UniProtKB"/>
</dbReference>
<dbReference type="InterPro" id="IPR031462">
    <property type="entry name" value="CTSRT"/>
</dbReference>
<dbReference type="InterPro" id="IPR048363">
    <property type="entry name" value="CTSRT_C2"/>
</dbReference>
<dbReference type="PANTHER" id="PTHR21665">
    <property type="entry name" value="CATION CHANNEL SPERM-ASSOCIATED TARGETING SUBUNIT TAU"/>
    <property type="match status" value="1"/>
</dbReference>
<dbReference type="PANTHER" id="PTHR21665:SF2">
    <property type="entry name" value="CATION CHANNEL SPERM-ASSOCIATED TARGETING SUBUNIT TAU"/>
    <property type="match status" value="1"/>
</dbReference>
<dbReference type="Pfam" id="PF15729">
    <property type="entry name" value="CTSRT"/>
    <property type="match status" value="1"/>
</dbReference>
<gene>
    <name evidence="6" type="primary">C2cd6</name>
    <name evidence="6" type="synonym">Als2cr11</name>
    <name evidence="4" type="synonym">CATSPERT</name>
</gene>
<name>CTSRT_MOUSE</name>
<sequence length="2282" mass="257620">MELPPPGNRRVSINNPQETSGRVPTTSAGFPTQSSKISLKRSTYAYRPSMMSNRSSGGQSLLPSSILQKTSLNPPGSLQSKPSNLSSVHYADEEGKPLTDKNKDKDKGRGKGKGTGTRLLTMLRKTLQGSQSDEMAIANQTPNLIPFGDVVGCLAIHIKSCRQFSQRFLGQQRFNLFMRVSINNIVKCTKIRHLKAVNNEKNLVLRFGEMKYFSVQVPRRQDDERNFIYLELMHDGGDPESPPIPLGGAESHLYEVIQKGCFTEVMHLMHKNSSICRVEVEFMFSYGNFGYGFSHQLKPLQKAIEPSMFMNIAPPPERTDPVTNVITPQRVEYPAFLSPEFNVSIGVPEASHATVVQLEKLREKPRERLERMKEEYKNMSTWIEKADYLRNLINPKMTKRDNKGSSIPSESNSSALEELERTTYDIHHRKYEAISNEYGDKEGRVIPVLKVLDQNYSEVFLPKSSDSTPLEDVLLPPIHSLQIVEENEMPHLPKTSEPEDRPHEERKSIVFSSDEELMPKHPSILKISSSQQENRRKMEKSPHFSDVLIIPDKPFEDLNTNKKGRPPIELRKSWERHPTDVACSLRKVAFAQKDYTIPVCKAETTEFKPKHQFQKLSKSGLDPFLRNINSKMSFRKKKDHDDGYRNLSTSSAEILEHEDQDPPYPGHSGSAGSDATWAENPSPVTVQMVNRDSLPPDLITATIVISDRKNKLSLDSVFNSANSLNTKSIFASDNPVVSLTKLSDSDNKLITDSSFNTTKPSNRRLSKDSNFNTTKPSDRKLSSDPSSNTTKPSDTKLFSDPSSNKLSQGPSSNASQLSGSNRLSHNPSINGNKSSYTSDLNKVSRDPSIVSTISSDPNKLSRDPSFVLAKSSDPNKLSHYPSIISAKSSDPNKLSHDPSFVSARSSDPNKLSHDPSIISARSSDPIKLSRDPSFVSARSSDPNKLSHDPSIISARSSDPNKLSRDPSINSTKLSDPSKLSRDPSIFSTKSSDPNKLYRVPSIISGMSSNPKLSRDPSIISGMSSDPKLSRDPSIISAKSSDPNKLSHDPSIISGMSSNPNKLSHDPSIISMKLSDMSKLSRESSINASKSSDTNQLSYDPNIISAKSLDSNNSSASSSPTVNSDTTTNAAEPSGTKNMLDPVVSTIDSSDKQSKLEWLPNVQGASSVTENINTHRSSNSVNFTSDIDILKQSIVLKSILSKNLQDLSDELFSKSELYTNDEGYSPPPSVHSRPSDSTDDRVLGKVQDLNSWRSSKDLLNSQVLLSPVVKNSPQDLLPEGEPGKSSDIEDYVSEKLLEAAGRNFPMNRKSSFKKKHLVSEESSSEHVLSGSIYEYVIKQIFTAPIFSQLGIGIKSSSEARMDSQNQLLTPWERSVTSHIINYEEKDSDVNLSQSKSIISQIIQSFPVNTLLESGVIKVIELDKEHQNSLLDSQTTSSTEQYSDSRSQIKLLSRQNTSSINPLDSSVSGAEYTEDCQSISTQESKYPVRDTKSDSPNDTEEMELDSNLESSSSSLDKVKDTDTAKLKNILKNIFSIFFKYNQSERRQQPEKDSESLIKHSSSSGSEHLEKTQENFNKADKKVDRKPILNPKLRMFLEKLSETEVKNLKSELSKHIQHYLVERLTESGHITKEDLPTIYHKLYLMNEKVELKEQTPFQEKYSETVKEIMSFVNNFNHHFIDKHLETKLRGFLSEILQNYFLKNLSVSNLFNETDAMALHASMSPVRSKSELGQDIADGNFGSSLKINMQYPVTKSLQHYLQDLSENELLSLKTDLSKYLQVLFIEKLYKSGLVSERQLKGISQEIISLHSPSIPLKHIKTNLPFRNESYFMREDSEEQMKYLKNGQNAALHVLLKDKCGETELSRKKERESSFSQILKENLPAIWEQKNIYTREEETLNLIQMQSFLNKNNQANPLTRSPERPSDISLKKQKKDHGFMQFTQVEGSVYKTEIQDPYSWDSRSKTIQSKPCLEKTLKMKLLDKRENNNFYKLTAQEKLDTEFSSYLKLPNCKIPKEKEPISRLSFPTWKTNTFIHVKPEIGEQSKLDHYYQRLKGNNNNNKKHLVTFAQFKNEMETLYRNPYEACNEKRAKISESQSFKYKEKEKSSRPFFFPEVLKRENTKSKRKERDHATKPKKSFHKIVRLLPATLPTTRPHLRKSAPRNLLHWTARRTIHDCLDRFDDLHAPTVKCPKKSKSGARLLGKSPEDSHNQAKHCARPYTAPEPNKRRESAAWKFASPRMVSAGLLHLYVTPAYGIRKVRSKRKLKEDIEKRPLISEIIQMLDNAE</sequence>
<organism evidence="7">
    <name type="scientific">Mus musculus</name>
    <name type="common">Mouse</name>
    <dbReference type="NCBI Taxonomy" id="10090"/>
    <lineage>
        <taxon>Eukaryota</taxon>
        <taxon>Metazoa</taxon>
        <taxon>Chordata</taxon>
        <taxon>Craniata</taxon>
        <taxon>Vertebrata</taxon>
        <taxon>Euteleostomi</taxon>
        <taxon>Mammalia</taxon>
        <taxon>Eutheria</taxon>
        <taxon>Euarchontoglires</taxon>
        <taxon>Glires</taxon>
        <taxon>Rodentia</taxon>
        <taxon>Myomorpha</taxon>
        <taxon>Muroidea</taxon>
        <taxon>Muridae</taxon>
        <taxon>Murinae</taxon>
        <taxon>Mus</taxon>
        <taxon>Mus</taxon>
    </lineage>
</organism>
<feature type="chain" id="PRO_0000456295" description="Cation channel sperm-associated targeting subunit tau">
    <location>
        <begin position="1"/>
        <end position="2282"/>
    </location>
</feature>
<feature type="domain" description="C2" evidence="1">
    <location>
        <begin position="131"/>
        <end position="266"/>
    </location>
</feature>
<feature type="region of interest" description="Disordered" evidence="2">
    <location>
        <begin position="1"/>
        <end position="118"/>
    </location>
</feature>
<feature type="region of interest" description="Disordered" evidence="2">
    <location>
        <begin position="397"/>
        <end position="416"/>
    </location>
</feature>
<feature type="region of interest" description="Disordered" evidence="2">
    <location>
        <begin position="656"/>
        <end position="679"/>
    </location>
</feature>
<feature type="region of interest" description="Disordered" evidence="2">
    <location>
        <begin position="747"/>
        <end position="1066"/>
    </location>
</feature>
<feature type="region of interest" description="Disordered" evidence="2">
    <location>
        <begin position="1104"/>
        <end position="1153"/>
    </location>
</feature>
<feature type="region of interest" description="Disordered" evidence="2">
    <location>
        <begin position="1217"/>
        <end position="1240"/>
    </location>
</feature>
<feature type="region of interest" description="Disordered" evidence="2">
    <location>
        <begin position="1426"/>
        <end position="1445"/>
    </location>
</feature>
<feature type="region of interest" description="Disordered" evidence="2">
    <location>
        <begin position="1452"/>
        <end position="1515"/>
    </location>
</feature>
<feature type="region of interest" description="Disordered" evidence="2">
    <location>
        <begin position="1542"/>
        <end position="1569"/>
    </location>
</feature>
<feature type="region of interest" description="Disordered" evidence="2">
    <location>
        <begin position="1908"/>
        <end position="1928"/>
    </location>
</feature>
<feature type="region of interest" description="Disordered" evidence="2">
    <location>
        <begin position="2187"/>
        <end position="2222"/>
    </location>
</feature>
<feature type="compositionally biased region" description="Polar residues" evidence="2">
    <location>
        <begin position="11"/>
        <end position="41"/>
    </location>
</feature>
<feature type="compositionally biased region" description="Polar residues" evidence="2">
    <location>
        <begin position="50"/>
        <end position="87"/>
    </location>
</feature>
<feature type="compositionally biased region" description="Basic and acidic residues" evidence="2">
    <location>
        <begin position="90"/>
        <end position="109"/>
    </location>
</feature>
<feature type="compositionally biased region" description="Polar residues" evidence="2">
    <location>
        <begin position="750"/>
        <end position="760"/>
    </location>
</feature>
<feature type="compositionally biased region" description="Polar residues" evidence="2">
    <location>
        <begin position="783"/>
        <end position="792"/>
    </location>
</feature>
<feature type="compositionally biased region" description="Polar residues" evidence="2">
    <location>
        <begin position="800"/>
        <end position="841"/>
    </location>
</feature>
<feature type="compositionally biased region" description="Polar residues" evidence="2">
    <location>
        <begin position="849"/>
        <end position="858"/>
    </location>
</feature>
<feature type="compositionally biased region" description="Polar residues" evidence="2">
    <location>
        <begin position="953"/>
        <end position="974"/>
    </location>
</feature>
<feature type="compositionally biased region" description="Low complexity" evidence="2">
    <location>
        <begin position="1104"/>
        <end position="1123"/>
    </location>
</feature>
<feature type="compositionally biased region" description="Polar residues" evidence="2">
    <location>
        <begin position="1124"/>
        <end position="1136"/>
    </location>
</feature>
<feature type="compositionally biased region" description="Polar residues" evidence="2">
    <location>
        <begin position="1452"/>
        <end position="1466"/>
    </location>
</feature>
<feature type="compositionally biased region" description="Polar residues" evidence="2">
    <location>
        <begin position="1473"/>
        <end position="1482"/>
    </location>
</feature>
<feature type="compositionally biased region" description="Basic and acidic residues" evidence="2">
    <location>
        <begin position="1484"/>
        <end position="1493"/>
    </location>
</feature>
<feature type="compositionally biased region" description="Acidic residues" evidence="2">
    <location>
        <begin position="1495"/>
        <end position="1504"/>
    </location>
</feature>
<feature type="compositionally biased region" description="Basic and acidic residues" evidence="2">
    <location>
        <begin position="1542"/>
        <end position="1555"/>
    </location>
</feature>
<feature type="compositionally biased region" description="Basic and acidic residues" evidence="2">
    <location>
        <begin position="1916"/>
        <end position="1925"/>
    </location>
</feature>
<feature type="splice variant" id="VSP_061603" description="In isoform 2.">
    <original>NRRKMEKSPHFSDVLIIPDKPFED</original>
    <variation>VKLRHLPISPERIRRRNLGFSPAE</variation>
    <location>
        <begin position="534"/>
        <end position="557"/>
    </location>
</feature>
<feature type="splice variant" id="VSP_061604" description="In isoform 2.">
    <location>
        <begin position="558"/>
        <end position="2282"/>
    </location>
</feature>
<proteinExistence type="evidence at protein level"/>
<comment type="function">
    <text evidence="3">Auxiliary component of the CatSper complex, a complex involved in sperm cell hyperactivation. Sperm cell hyperactivation is needed for sperm motility which is essential late in the preparation of sperm for fertilization. Required for CatSper complex targeting and trafficking into the quadrilinear nanodomains. Targets the preassembled CatSper complexes to elongating flagella, where it links the channel-carrying vesicles and motor proteins.</text>
</comment>
<comment type="subunit">
    <text evidence="3">Component of the CatSper complex or CatSpermasome composed of the core pore-forming members CATSPER1, CATSPER2, CATSPER3 and CATSPER4 as well as auxiliary members CATSPERB, CATSPERG, CATSPERD, CATSPERE, CATSPERZ, C2CD6/CATSPERT, SLCO6C1, TMEM249, TMEM262 and EFCAB9. HSPA1 may be an additional auxiliary complex member. The core complex members CATSPER1, CATSPER2, CATSPER3 and CATSPER4 form a heterotetrameric channel. The auxiliary CATSPERB, CATSPERG, CATSPERD and CATSPERE subunits form a pavilion-like structure over the pore which stabilizes the complex through interactions with CATSPER4, CATSPER3, CATSPER1 and CATSPER2 respectively. SLCO6C1 interacts with CATSPERE and TMEM262/CATSPERH interacts with CATSPERB, further stabilizing the complex. C2CD6/CATSPERT interacts at least with CATSPERD and is required for targeting the CatSper complex in the flagellar membrane.</text>
</comment>
<comment type="subcellular location">
    <subcellularLocation>
        <location evidence="3">Cell projection</location>
        <location evidence="3">Cilium</location>
        <location evidence="3">Flagellum membrane</location>
    </subcellularLocation>
    <text evidence="3">Specifically located in the principal piece of the sperm tail.</text>
</comment>
<comment type="alternative products">
    <event type="alternative splicing"/>
    <isoform>
        <id>A0A5F8MPU3-1</id>
        <name>1</name>
        <name evidence="4">L</name>
        <sequence type="displayed"/>
    </isoform>
    <isoform>
        <id>A0A5F8MPU3-2</id>
        <name>2</name>
        <name evidence="4">S</name>
        <sequence type="described" ref="VSP_061603 VSP_061604"/>
    </isoform>
</comment>
<comment type="tissue specificity">
    <molecule>Isoform 1</molecule>
    <text evidence="3">Expressed in cauda sperm (at protein level).</text>
</comment>
<comment type="tissue specificity">
    <molecule>Isoform 2</molecule>
    <text evidence="3">Expressed in cauda sperm (at protein level).</text>
</comment>
<comment type="disruption phenotype">
    <text evidence="3">Mutant mice have no gross abnormality in survival, appearance or behavior. Males are infertile with defective sperm hyperactivation. Females have normal reproductive ability and give birth with no difference in litter size.</text>
</comment>
<accession>A0A5F8MPU3</accession>
<accession>E9Q152</accession>
<evidence type="ECO:0000255" key="1">
    <source>
        <dbReference type="PROSITE-ProRule" id="PRU00041"/>
    </source>
</evidence>
<evidence type="ECO:0000256" key="2">
    <source>
        <dbReference type="SAM" id="MobiDB-lite"/>
    </source>
</evidence>
<evidence type="ECO:0000269" key="3">
    <source>
    </source>
</evidence>
<evidence type="ECO:0000303" key="4">
    <source>
    </source>
</evidence>
<evidence type="ECO:0000305" key="5">
    <source>
    </source>
</evidence>
<evidence type="ECO:0000312" key="6">
    <source>
        <dbReference type="MGI" id="MGI:1920713"/>
    </source>
</evidence>
<evidence type="ECO:0000312" key="7">
    <source>
        <dbReference type="Proteomes" id="UP000000589"/>
    </source>
</evidence>
<keyword id="KW-0025">Alternative splicing</keyword>
<keyword id="KW-1003">Cell membrane</keyword>
<keyword id="KW-0966">Cell projection</keyword>
<keyword id="KW-0969">Cilium</keyword>
<keyword id="KW-0175">Coiled coil</keyword>
<keyword id="KW-0282">Flagellum</keyword>
<keyword id="KW-0472">Membrane</keyword>
<keyword id="KW-1185">Reference proteome</keyword>
<protein>
    <recommendedName>
        <fullName evidence="5">Cation channel sperm-associated targeting subunit tau</fullName>
        <shortName evidence="4">CatSper-tau</shortName>
    </recommendedName>
    <alternativeName>
        <fullName>C2 calcium-dependent domain-containing 6</fullName>
    </alternativeName>
</protein>
<reference evidence="7" key="1">
    <citation type="journal article" date="2009" name="PLoS Biol.">
        <title>Lineage-specific biology revealed by a finished genome assembly of the mouse.</title>
        <authorList>
            <person name="Church D.M."/>
            <person name="Goodstadt L."/>
            <person name="Hillier L.W."/>
            <person name="Zody M.C."/>
            <person name="Goldstein S."/>
            <person name="She X."/>
            <person name="Bult C.J."/>
            <person name="Agarwala R."/>
            <person name="Cherry J.L."/>
            <person name="DiCuccio M."/>
            <person name="Hlavina W."/>
            <person name="Kapustin Y."/>
            <person name="Meric P."/>
            <person name="Maglott D."/>
            <person name="Birtle Z."/>
            <person name="Marques A.C."/>
            <person name="Graves T."/>
            <person name="Zhou S."/>
            <person name="Teague B."/>
            <person name="Potamousis K."/>
            <person name="Churas C."/>
            <person name="Place M."/>
            <person name="Herschleb J."/>
            <person name="Runnheim R."/>
            <person name="Forrest D."/>
            <person name="Amos-Landgraf J."/>
            <person name="Schwartz D.C."/>
            <person name="Cheng Z."/>
            <person name="Lindblad-Toh K."/>
            <person name="Eichler E.E."/>
            <person name="Ponting C.P."/>
        </authorList>
    </citation>
    <scope>NUCLEOTIDE SEQUENCE [LARGE SCALE GENOMIC DNA]</scope>
    <source>
        <strain evidence="7">C57BL/6J</strain>
    </source>
</reference>
<reference key="2">
    <citation type="journal article" date="2022" name="Cell Rep.">
        <title>C2cd6-encoded CatSpertau targets sperm calcium channel to Ca2+ signaling domains in the flagellar membrane.</title>
        <authorList>
            <person name="Hwang J.Y."/>
            <person name="Wang H."/>
            <person name="Lu Y."/>
            <person name="Ikawa M."/>
            <person name="Chung J.J."/>
        </authorList>
    </citation>
    <scope>FUNCTION</scope>
    <scope>SUBCELLULAR LOCATION</scope>
    <scope>SUBUNIT</scope>
    <scope>DISRUPTION PHENOTYPE</scope>
    <scope>TISSUE SPECIFICITY</scope>
</reference>